<proteinExistence type="inferred from homology"/>
<comment type="function">
    <text evidence="1">Prevents the cell division inhibition by proteins minC and minD at internal division sites while permitting inhibition at polar sites.</text>
</comment>
<comment type="subcellular location">
    <subcellularLocation>
        <location>Plastid</location>
        <location>Chloroplast</location>
    </subcellularLocation>
</comment>
<comment type="similarity">
    <text evidence="2">Belongs to the MinE family.</text>
</comment>
<sequence>MITEFFERLFLSNKGSREDVKRRLKLVLAHDRSTLNASTLEKMREEILLVVSKYVELDTDSLEFSIRTDSKMTALIANLPIRRILKDI</sequence>
<feature type="chain" id="PRO_0000205899" description="Putative cell division topological specificity factor">
    <location>
        <begin position="1"/>
        <end position="88"/>
    </location>
</feature>
<reference key="1">
    <citation type="journal article" date="1999" name="J. Mol. Evol.">
        <title>The plastid genome of the cryptophyte alga, Guillardia theta: complete sequence and conserved synteny groups confirm its common ancestry with red algae.</title>
        <authorList>
            <person name="Douglas S.E."/>
            <person name="Penny S.L."/>
        </authorList>
    </citation>
    <scope>NUCLEOTIDE SEQUENCE [LARGE SCALE GENOMIC DNA]</scope>
</reference>
<organism>
    <name type="scientific">Guillardia theta</name>
    <name type="common">Cryptophyte</name>
    <name type="synonym">Cryptomonas phi</name>
    <dbReference type="NCBI Taxonomy" id="55529"/>
    <lineage>
        <taxon>Eukaryota</taxon>
        <taxon>Cryptophyceae</taxon>
        <taxon>Pyrenomonadales</taxon>
        <taxon>Geminigeraceae</taxon>
        <taxon>Guillardia</taxon>
    </lineage>
</organism>
<geneLocation type="chloroplast"/>
<evidence type="ECO:0000250" key="1"/>
<evidence type="ECO:0000305" key="2"/>
<keyword id="KW-0131">Cell cycle</keyword>
<keyword id="KW-0132">Cell division</keyword>
<keyword id="KW-0150">Chloroplast</keyword>
<keyword id="KW-0934">Plastid</keyword>
<gene>
    <name type="primary">minE</name>
</gene>
<dbReference type="EMBL" id="AF041468">
    <property type="protein sequence ID" value="AAC35620.1"/>
    <property type="molecule type" value="Genomic_DNA"/>
</dbReference>
<dbReference type="RefSeq" id="NP_050686.1">
    <property type="nucleotide sequence ID" value="NC_000926.1"/>
</dbReference>
<dbReference type="SMR" id="O78435"/>
<dbReference type="GeneID" id="856976"/>
<dbReference type="HOGENOM" id="CLU_137929_1_1_1"/>
<dbReference type="OMA" id="EVISRYM"/>
<dbReference type="GO" id="GO:0009507">
    <property type="term" value="C:chloroplast"/>
    <property type="evidence" value="ECO:0007669"/>
    <property type="project" value="UniProtKB-SubCell"/>
</dbReference>
<dbReference type="GO" id="GO:0051301">
    <property type="term" value="P:cell division"/>
    <property type="evidence" value="ECO:0007669"/>
    <property type="project" value="UniProtKB-KW"/>
</dbReference>
<dbReference type="GO" id="GO:0032955">
    <property type="term" value="P:regulation of division septum assembly"/>
    <property type="evidence" value="ECO:0007669"/>
    <property type="project" value="InterPro"/>
</dbReference>
<dbReference type="Gene3D" id="3.30.1070.10">
    <property type="entry name" value="Cell division topological specificity factor MinE"/>
    <property type="match status" value="1"/>
</dbReference>
<dbReference type="HAMAP" id="MF_00262">
    <property type="entry name" value="MinE"/>
    <property type="match status" value="1"/>
</dbReference>
<dbReference type="InterPro" id="IPR005527">
    <property type="entry name" value="MinE"/>
</dbReference>
<dbReference type="InterPro" id="IPR036707">
    <property type="entry name" value="MinE_sf"/>
</dbReference>
<dbReference type="NCBIfam" id="TIGR01215">
    <property type="entry name" value="minE"/>
    <property type="match status" value="1"/>
</dbReference>
<dbReference type="Pfam" id="PF03776">
    <property type="entry name" value="MinE"/>
    <property type="match status" value="1"/>
</dbReference>
<dbReference type="SUPFAM" id="SSF55229">
    <property type="entry name" value="Cell division protein MinE topological specificity domain"/>
    <property type="match status" value="1"/>
</dbReference>
<protein>
    <recommendedName>
        <fullName>Putative cell division topological specificity factor</fullName>
    </recommendedName>
</protein>
<name>MINE_GUITH</name>
<accession>O78435</accession>